<comment type="function">
    <text evidence="1">Catalyzes the transfer of the enolpyruvyl moiety of phosphoenolpyruvate (PEP) to the 5-hydroxyl of shikimate-3-phosphate (S3P) to produce enolpyruvyl shikimate-3-phosphate and inorganic phosphate.</text>
</comment>
<comment type="catalytic activity">
    <reaction evidence="1">
        <text>3-phosphoshikimate + phosphoenolpyruvate = 5-O-(1-carboxyvinyl)-3-phosphoshikimate + phosphate</text>
        <dbReference type="Rhea" id="RHEA:21256"/>
        <dbReference type="ChEBI" id="CHEBI:43474"/>
        <dbReference type="ChEBI" id="CHEBI:57701"/>
        <dbReference type="ChEBI" id="CHEBI:58702"/>
        <dbReference type="ChEBI" id="CHEBI:145989"/>
        <dbReference type="EC" id="2.5.1.19"/>
    </reaction>
    <physiologicalReaction direction="left-to-right" evidence="1">
        <dbReference type="Rhea" id="RHEA:21257"/>
    </physiologicalReaction>
</comment>
<comment type="pathway">
    <text evidence="1">Metabolic intermediate biosynthesis; chorismate biosynthesis; chorismate from D-erythrose 4-phosphate and phosphoenolpyruvate: step 6/7.</text>
</comment>
<comment type="subunit">
    <text evidence="1">Monomer.</text>
</comment>
<comment type="subcellular location">
    <subcellularLocation>
        <location evidence="1">Cytoplasm</location>
    </subcellularLocation>
</comment>
<comment type="similarity">
    <text evidence="1">Belongs to the EPSP synthase family.</text>
</comment>
<accession>Q1RDV0</accession>
<proteinExistence type="inferred from homology"/>
<reference key="1">
    <citation type="journal article" date="2006" name="Proc. Natl. Acad. Sci. U.S.A.">
        <title>Identification of genes subject to positive selection in uropathogenic strains of Escherichia coli: a comparative genomics approach.</title>
        <authorList>
            <person name="Chen S.L."/>
            <person name="Hung C.-S."/>
            <person name="Xu J."/>
            <person name="Reigstad C.S."/>
            <person name="Magrini V."/>
            <person name="Sabo A."/>
            <person name="Blasiar D."/>
            <person name="Bieri T."/>
            <person name="Meyer R.R."/>
            <person name="Ozersky P."/>
            <person name="Armstrong J.R."/>
            <person name="Fulton R.S."/>
            <person name="Latreille J.P."/>
            <person name="Spieth J."/>
            <person name="Hooton T.M."/>
            <person name="Mardis E.R."/>
            <person name="Hultgren S.J."/>
            <person name="Gordon J.I."/>
        </authorList>
    </citation>
    <scope>NUCLEOTIDE SEQUENCE [LARGE SCALE GENOMIC DNA]</scope>
    <source>
        <strain>UTI89 / UPEC</strain>
    </source>
</reference>
<evidence type="ECO:0000255" key="1">
    <source>
        <dbReference type="HAMAP-Rule" id="MF_00210"/>
    </source>
</evidence>
<keyword id="KW-0028">Amino-acid biosynthesis</keyword>
<keyword id="KW-0057">Aromatic amino acid biosynthesis</keyword>
<keyword id="KW-0963">Cytoplasm</keyword>
<keyword id="KW-0808">Transferase</keyword>
<gene>
    <name evidence="1" type="primary">aroA</name>
    <name type="ordered locus">UTI89_C0979</name>
</gene>
<organism>
    <name type="scientific">Escherichia coli (strain UTI89 / UPEC)</name>
    <dbReference type="NCBI Taxonomy" id="364106"/>
    <lineage>
        <taxon>Bacteria</taxon>
        <taxon>Pseudomonadati</taxon>
        <taxon>Pseudomonadota</taxon>
        <taxon>Gammaproteobacteria</taxon>
        <taxon>Enterobacterales</taxon>
        <taxon>Enterobacteriaceae</taxon>
        <taxon>Escherichia</taxon>
    </lineage>
</organism>
<dbReference type="EC" id="2.5.1.19" evidence="1"/>
<dbReference type="EMBL" id="CP000243">
    <property type="protein sequence ID" value="ABE06464.1"/>
    <property type="molecule type" value="Genomic_DNA"/>
</dbReference>
<dbReference type="RefSeq" id="WP_000445244.1">
    <property type="nucleotide sequence ID" value="NZ_CP064825.1"/>
</dbReference>
<dbReference type="SMR" id="Q1RDV0"/>
<dbReference type="KEGG" id="eci:UTI89_C0979"/>
<dbReference type="HOGENOM" id="CLU_024321_0_0_6"/>
<dbReference type="UniPathway" id="UPA00053">
    <property type="reaction ID" value="UER00089"/>
</dbReference>
<dbReference type="Proteomes" id="UP000001952">
    <property type="component" value="Chromosome"/>
</dbReference>
<dbReference type="GO" id="GO:0005737">
    <property type="term" value="C:cytoplasm"/>
    <property type="evidence" value="ECO:0007669"/>
    <property type="project" value="UniProtKB-SubCell"/>
</dbReference>
<dbReference type="GO" id="GO:0003866">
    <property type="term" value="F:3-phosphoshikimate 1-carboxyvinyltransferase activity"/>
    <property type="evidence" value="ECO:0007669"/>
    <property type="project" value="UniProtKB-UniRule"/>
</dbReference>
<dbReference type="GO" id="GO:0008652">
    <property type="term" value="P:amino acid biosynthetic process"/>
    <property type="evidence" value="ECO:0007669"/>
    <property type="project" value="UniProtKB-KW"/>
</dbReference>
<dbReference type="GO" id="GO:0009073">
    <property type="term" value="P:aromatic amino acid family biosynthetic process"/>
    <property type="evidence" value="ECO:0007669"/>
    <property type="project" value="UniProtKB-KW"/>
</dbReference>
<dbReference type="GO" id="GO:0009423">
    <property type="term" value="P:chorismate biosynthetic process"/>
    <property type="evidence" value="ECO:0007669"/>
    <property type="project" value="UniProtKB-UniRule"/>
</dbReference>
<dbReference type="CDD" id="cd01554">
    <property type="entry name" value="EPT-like"/>
    <property type="match status" value="1"/>
</dbReference>
<dbReference type="FunFam" id="3.65.10.10:FF:000003">
    <property type="entry name" value="3-phosphoshikimate 1-carboxyvinyltransferase"/>
    <property type="match status" value="1"/>
</dbReference>
<dbReference type="FunFam" id="3.65.10.10:FF:000004">
    <property type="entry name" value="3-phosphoshikimate 1-carboxyvinyltransferase"/>
    <property type="match status" value="1"/>
</dbReference>
<dbReference type="Gene3D" id="3.65.10.10">
    <property type="entry name" value="Enolpyruvate transferase domain"/>
    <property type="match status" value="2"/>
</dbReference>
<dbReference type="HAMAP" id="MF_00210">
    <property type="entry name" value="EPSP_synth"/>
    <property type="match status" value="1"/>
</dbReference>
<dbReference type="InterPro" id="IPR001986">
    <property type="entry name" value="Enolpyruvate_Tfrase_dom"/>
</dbReference>
<dbReference type="InterPro" id="IPR036968">
    <property type="entry name" value="Enolpyruvate_Tfrase_sf"/>
</dbReference>
<dbReference type="InterPro" id="IPR006264">
    <property type="entry name" value="EPSP_synthase"/>
</dbReference>
<dbReference type="InterPro" id="IPR023193">
    <property type="entry name" value="EPSP_synthase_CS"/>
</dbReference>
<dbReference type="InterPro" id="IPR013792">
    <property type="entry name" value="RNA3'P_cycl/enolpyr_Trfase_a/b"/>
</dbReference>
<dbReference type="NCBIfam" id="TIGR01356">
    <property type="entry name" value="aroA"/>
    <property type="match status" value="1"/>
</dbReference>
<dbReference type="PANTHER" id="PTHR21090">
    <property type="entry name" value="AROM/DEHYDROQUINATE SYNTHASE"/>
    <property type="match status" value="1"/>
</dbReference>
<dbReference type="PANTHER" id="PTHR21090:SF5">
    <property type="entry name" value="PENTAFUNCTIONAL AROM POLYPEPTIDE"/>
    <property type="match status" value="1"/>
</dbReference>
<dbReference type="Pfam" id="PF00275">
    <property type="entry name" value="EPSP_synthase"/>
    <property type="match status" value="1"/>
</dbReference>
<dbReference type="PIRSF" id="PIRSF000505">
    <property type="entry name" value="EPSPS"/>
    <property type="match status" value="1"/>
</dbReference>
<dbReference type="SUPFAM" id="SSF55205">
    <property type="entry name" value="EPT/RTPC-like"/>
    <property type="match status" value="1"/>
</dbReference>
<dbReference type="PROSITE" id="PS00104">
    <property type="entry name" value="EPSP_SYNTHASE_1"/>
    <property type="match status" value="1"/>
</dbReference>
<dbReference type="PROSITE" id="PS00885">
    <property type="entry name" value="EPSP_SYNTHASE_2"/>
    <property type="match status" value="1"/>
</dbReference>
<feature type="chain" id="PRO_1000012432" description="3-phosphoshikimate 1-carboxyvinyltransferase">
    <location>
        <begin position="1"/>
        <end position="427"/>
    </location>
</feature>
<feature type="active site" description="Proton acceptor" evidence="1">
    <location>
        <position position="313"/>
    </location>
</feature>
<feature type="binding site" evidence="1">
    <location>
        <position position="22"/>
    </location>
    <ligand>
        <name>3-phosphoshikimate</name>
        <dbReference type="ChEBI" id="CHEBI:145989"/>
    </ligand>
</feature>
<feature type="binding site" evidence="1">
    <location>
        <position position="22"/>
    </location>
    <ligand>
        <name>phosphoenolpyruvate</name>
        <dbReference type="ChEBI" id="CHEBI:58702"/>
    </ligand>
</feature>
<feature type="binding site" evidence="1">
    <location>
        <position position="23"/>
    </location>
    <ligand>
        <name>3-phosphoshikimate</name>
        <dbReference type="ChEBI" id="CHEBI:145989"/>
    </ligand>
</feature>
<feature type="binding site" evidence="1">
    <location>
        <position position="27"/>
    </location>
    <ligand>
        <name>3-phosphoshikimate</name>
        <dbReference type="ChEBI" id="CHEBI:145989"/>
    </ligand>
</feature>
<feature type="binding site" evidence="1">
    <location>
        <position position="96"/>
    </location>
    <ligand>
        <name>phosphoenolpyruvate</name>
        <dbReference type="ChEBI" id="CHEBI:58702"/>
    </ligand>
</feature>
<feature type="binding site" evidence="1">
    <location>
        <position position="124"/>
    </location>
    <ligand>
        <name>phosphoenolpyruvate</name>
        <dbReference type="ChEBI" id="CHEBI:58702"/>
    </ligand>
</feature>
<feature type="binding site" evidence="1">
    <location>
        <position position="169"/>
    </location>
    <ligand>
        <name>3-phosphoshikimate</name>
        <dbReference type="ChEBI" id="CHEBI:145989"/>
    </ligand>
</feature>
<feature type="binding site" evidence="1">
    <location>
        <position position="170"/>
    </location>
    <ligand>
        <name>3-phosphoshikimate</name>
        <dbReference type="ChEBI" id="CHEBI:145989"/>
    </ligand>
</feature>
<feature type="binding site" evidence="1">
    <location>
        <position position="171"/>
    </location>
    <ligand>
        <name>3-phosphoshikimate</name>
        <dbReference type="ChEBI" id="CHEBI:145989"/>
    </ligand>
</feature>
<feature type="binding site" evidence="1">
    <location>
        <position position="171"/>
    </location>
    <ligand>
        <name>phosphoenolpyruvate</name>
        <dbReference type="ChEBI" id="CHEBI:58702"/>
    </ligand>
</feature>
<feature type="binding site" evidence="1">
    <location>
        <position position="197"/>
    </location>
    <ligand>
        <name>3-phosphoshikimate</name>
        <dbReference type="ChEBI" id="CHEBI:145989"/>
    </ligand>
</feature>
<feature type="binding site" evidence="1">
    <location>
        <position position="313"/>
    </location>
    <ligand>
        <name>3-phosphoshikimate</name>
        <dbReference type="ChEBI" id="CHEBI:145989"/>
    </ligand>
</feature>
<feature type="binding site" evidence="1">
    <location>
        <position position="336"/>
    </location>
    <ligand>
        <name>3-phosphoshikimate</name>
        <dbReference type="ChEBI" id="CHEBI:145989"/>
    </ligand>
</feature>
<feature type="binding site" evidence="1">
    <location>
        <position position="340"/>
    </location>
    <ligand>
        <name>3-phosphoshikimate</name>
        <dbReference type="ChEBI" id="CHEBI:145989"/>
    </ligand>
</feature>
<feature type="binding site" evidence="1">
    <location>
        <position position="344"/>
    </location>
    <ligand>
        <name>phosphoenolpyruvate</name>
        <dbReference type="ChEBI" id="CHEBI:58702"/>
    </ligand>
</feature>
<feature type="binding site" evidence="1">
    <location>
        <position position="386"/>
    </location>
    <ligand>
        <name>phosphoenolpyruvate</name>
        <dbReference type="ChEBI" id="CHEBI:58702"/>
    </ligand>
</feature>
<feature type="binding site" evidence="1">
    <location>
        <position position="411"/>
    </location>
    <ligand>
        <name>phosphoenolpyruvate</name>
        <dbReference type="ChEBI" id="CHEBI:58702"/>
    </ligand>
</feature>
<protein>
    <recommendedName>
        <fullName evidence="1">3-phosphoshikimate 1-carboxyvinyltransferase</fullName>
        <ecNumber evidence="1">2.5.1.19</ecNumber>
    </recommendedName>
    <alternativeName>
        <fullName evidence="1">5-enolpyruvylshikimate-3-phosphate synthase</fullName>
        <shortName evidence="1">EPSP synthase</shortName>
        <shortName evidence="1">EPSPS</shortName>
    </alternativeName>
</protein>
<name>AROA_ECOUT</name>
<sequence>MESLTLQPIARVDGTINLPGSKSVSNRALLLAALAHGKTVLTNLLDSDDVRHMLNALTALGVSYTLSADRTRCEIIGNGGPLHAESARELFLGNAGTAMRPLAAALCLGSNDIVLTGEPRMKERPIGHLVDALRQGGAKITYLEQENYPPLRLQGGFTGGNVDVDGSVSSQFLTALLMTAPLAPEDTVIRIKGDLVSKPYIDITLNLMKTFGVEIENQHYQQFVVKGGQSYQSPGTYLVEGDASSASYFLAAAAIRGGTVKVTGIGRNSMQGDIRFADVLEKMGATICWGDDYISCTRGELNAIDMDMNHIPDAAMTIATAALFAKGTTTLRNIYNWRVKETDRLFAMATELRKVGAEVEEGHDFIRITPPEKLKFAEIATYNDHRMAMCFSLVALSDTPVTILDPKCTAKTFPDYFEQLARISQPG</sequence>